<sequence>MEEPEDNPYIRDPPLDFEPVDELDAASATRQVETLREAIRFHDYRYYQLADPVISDRAYDQLFERLERLESKFDRSSATSPTQRVGGEPLDELETVEHVAPMRSIESSVEVDDIRDFDTRIQERLAAAGYEGPVRYLCEPKFDGLSVELVYEEGELSRAATRGDGQEGDDVTANVRTIRSVPLTLDGDCPSFLAVRGEIFMPKDAFQEYNRERLERGEEPFSNPRNAAAGTLRQLDPSVTAERPLDCFVFDILDDGGRGFETRMAEHEAVESWGFQVDDHTARVDDIEAAIAFREEMLDGRASLDYEIDGIVIKLDRKDACALLGATARAPRWAYAYKFPARTEETTVRDIVLQVGRTGRLTPVALLDPVEVSGVEVSRATLHNPQQIAELGVGIGDRVTLKRAGDVIPYIEAVVDSEREAHFEFPDRCPVCESPLERDGPLAYCTGGVACPAQLRRAVEHYASRSGLDIEGLGESAVDQLVDAGLVERLPDLYDLSVADVAELDGWGRTSAENLLEELEASTEPPLPAFLSALGIPGVGTTTAADIAREFGTLDAVMDATAEELRAVDGIGPTLGGEIAEFFDSDRNQQVIEQLRKRGVDPEPAETAGDALSGQTFVFTGSLDGLTREEAHELVETSGGTATGSVSGNTDYLVVGDSPGQRKREAANEHGVETLSQSDFESLLESHGIEI</sequence>
<evidence type="ECO:0000255" key="1">
    <source>
        <dbReference type="HAMAP-Rule" id="MF_01588"/>
    </source>
</evidence>
<dbReference type="EC" id="6.5.1.2" evidence="1"/>
<dbReference type="EMBL" id="CR936257">
    <property type="protein sequence ID" value="CAI48532.1"/>
    <property type="molecule type" value="Genomic_DNA"/>
</dbReference>
<dbReference type="RefSeq" id="WP_011322168.1">
    <property type="nucleotide sequence ID" value="NC_007426.1"/>
</dbReference>
<dbReference type="SMR" id="Q3ITK1"/>
<dbReference type="STRING" id="348780.NP_0882A"/>
<dbReference type="EnsemblBacteria" id="CAI48532">
    <property type="protein sequence ID" value="CAI48532"/>
    <property type="gene ID" value="NP_0882A"/>
</dbReference>
<dbReference type="GeneID" id="3702885"/>
<dbReference type="KEGG" id="nph:NP_0882A"/>
<dbReference type="eggNOG" id="arCOG04754">
    <property type="taxonomic scope" value="Archaea"/>
</dbReference>
<dbReference type="HOGENOM" id="CLU_007764_2_1_2"/>
<dbReference type="OrthoDB" id="213206at2157"/>
<dbReference type="Proteomes" id="UP000002698">
    <property type="component" value="Chromosome"/>
</dbReference>
<dbReference type="GO" id="GO:0003677">
    <property type="term" value="F:DNA binding"/>
    <property type="evidence" value="ECO:0007669"/>
    <property type="project" value="InterPro"/>
</dbReference>
<dbReference type="GO" id="GO:0003911">
    <property type="term" value="F:DNA ligase (NAD+) activity"/>
    <property type="evidence" value="ECO:0007669"/>
    <property type="project" value="UniProtKB-UniRule"/>
</dbReference>
<dbReference type="GO" id="GO:0046872">
    <property type="term" value="F:metal ion binding"/>
    <property type="evidence" value="ECO:0007669"/>
    <property type="project" value="UniProtKB-KW"/>
</dbReference>
<dbReference type="GO" id="GO:0006281">
    <property type="term" value="P:DNA repair"/>
    <property type="evidence" value="ECO:0007669"/>
    <property type="project" value="UniProtKB-KW"/>
</dbReference>
<dbReference type="GO" id="GO:0006260">
    <property type="term" value="P:DNA replication"/>
    <property type="evidence" value="ECO:0007669"/>
    <property type="project" value="UniProtKB-KW"/>
</dbReference>
<dbReference type="CDD" id="cd17748">
    <property type="entry name" value="BRCT_DNA_ligase_like"/>
    <property type="match status" value="1"/>
</dbReference>
<dbReference type="CDD" id="cd00114">
    <property type="entry name" value="LIGANc"/>
    <property type="match status" value="1"/>
</dbReference>
<dbReference type="Gene3D" id="1.10.150.20">
    <property type="entry name" value="5' to 3' exonuclease, C-terminal subdomain"/>
    <property type="match status" value="2"/>
</dbReference>
<dbReference type="Gene3D" id="3.40.50.10190">
    <property type="entry name" value="BRCT domain"/>
    <property type="match status" value="1"/>
</dbReference>
<dbReference type="Gene3D" id="3.30.470.30">
    <property type="entry name" value="DNA ligase/mRNA capping enzyme"/>
    <property type="match status" value="1"/>
</dbReference>
<dbReference type="Gene3D" id="1.10.287.610">
    <property type="entry name" value="Helix hairpin bin"/>
    <property type="match status" value="1"/>
</dbReference>
<dbReference type="Gene3D" id="2.40.50.140">
    <property type="entry name" value="Nucleic acid-binding proteins"/>
    <property type="match status" value="1"/>
</dbReference>
<dbReference type="HAMAP" id="MF_01588">
    <property type="entry name" value="DNA_ligase_A"/>
    <property type="match status" value="1"/>
</dbReference>
<dbReference type="InterPro" id="IPR001357">
    <property type="entry name" value="BRCT_dom"/>
</dbReference>
<dbReference type="InterPro" id="IPR036420">
    <property type="entry name" value="BRCT_dom_sf"/>
</dbReference>
<dbReference type="InterPro" id="IPR041663">
    <property type="entry name" value="DisA/LigA_HHH"/>
</dbReference>
<dbReference type="InterPro" id="IPR001679">
    <property type="entry name" value="DNA_ligase"/>
</dbReference>
<dbReference type="InterPro" id="IPR018239">
    <property type="entry name" value="DNA_ligase_AS"/>
</dbReference>
<dbReference type="InterPro" id="IPR033136">
    <property type="entry name" value="DNA_ligase_CS"/>
</dbReference>
<dbReference type="InterPro" id="IPR013839">
    <property type="entry name" value="DNAligase_adenylation"/>
</dbReference>
<dbReference type="InterPro" id="IPR013840">
    <property type="entry name" value="DNAligase_N"/>
</dbReference>
<dbReference type="InterPro" id="IPR003583">
    <property type="entry name" value="Hlx-hairpin-Hlx_DNA-bd_motif"/>
</dbReference>
<dbReference type="InterPro" id="IPR012340">
    <property type="entry name" value="NA-bd_OB-fold"/>
</dbReference>
<dbReference type="InterPro" id="IPR004150">
    <property type="entry name" value="NAD_DNA_ligase_OB"/>
</dbReference>
<dbReference type="InterPro" id="IPR010994">
    <property type="entry name" value="RuvA_2-like"/>
</dbReference>
<dbReference type="NCBIfam" id="TIGR00575">
    <property type="entry name" value="dnlj"/>
    <property type="match status" value="1"/>
</dbReference>
<dbReference type="NCBIfam" id="NF005932">
    <property type="entry name" value="PRK07956.1"/>
    <property type="match status" value="1"/>
</dbReference>
<dbReference type="NCBIfam" id="NF010931">
    <property type="entry name" value="PRK14351.1"/>
    <property type="match status" value="1"/>
</dbReference>
<dbReference type="PANTHER" id="PTHR23389">
    <property type="entry name" value="CHROMOSOME TRANSMISSION FIDELITY FACTOR 18"/>
    <property type="match status" value="1"/>
</dbReference>
<dbReference type="PANTHER" id="PTHR23389:SF9">
    <property type="entry name" value="DNA LIGASE"/>
    <property type="match status" value="1"/>
</dbReference>
<dbReference type="Pfam" id="PF00533">
    <property type="entry name" value="BRCT"/>
    <property type="match status" value="1"/>
</dbReference>
<dbReference type="Pfam" id="PF01653">
    <property type="entry name" value="DNA_ligase_aden"/>
    <property type="match status" value="1"/>
</dbReference>
<dbReference type="Pfam" id="PF03120">
    <property type="entry name" value="DNA_ligase_OB"/>
    <property type="match status" value="1"/>
</dbReference>
<dbReference type="Pfam" id="PF12826">
    <property type="entry name" value="HHH_2"/>
    <property type="match status" value="1"/>
</dbReference>
<dbReference type="Pfam" id="PF14520">
    <property type="entry name" value="HHH_5"/>
    <property type="match status" value="1"/>
</dbReference>
<dbReference type="Pfam" id="PF22745">
    <property type="entry name" value="Nlig-Ia"/>
    <property type="match status" value="1"/>
</dbReference>
<dbReference type="PIRSF" id="PIRSF001604">
    <property type="entry name" value="LigA"/>
    <property type="match status" value="1"/>
</dbReference>
<dbReference type="SMART" id="SM00292">
    <property type="entry name" value="BRCT"/>
    <property type="match status" value="1"/>
</dbReference>
<dbReference type="SMART" id="SM00278">
    <property type="entry name" value="HhH1"/>
    <property type="match status" value="3"/>
</dbReference>
<dbReference type="SMART" id="SM00532">
    <property type="entry name" value="LIGANc"/>
    <property type="match status" value="1"/>
</dbReference>
<dbReference type="SUPFAM" id="SSF52113">
    <property type="entry name" value="BRCT domain"/>
    <property type="match status" value="1"/>
</dbReference>
<dbReference type="SUPFAM" id="SSF56091">
    <property type="entry name" value="DNA ligase/mRNA capping enzyme, catalytic domain"/>
    <property type="match status" value="1"/>
</dbReference>
<dbReference type="SUPFAM" id="SSF50249">
    <property type="entry name" value="Nucleic acid-binding proteins"/>
    <property type="match status" value="1"/>
</dbReference>
<dbReference type="SUPFAM" id="SSF47781">
    <property type="entry name" value="RuvA domain 2-like"/>
    <property type="match status" value="1"/>
</dbReference>
<dbReference type="PROSITE" id="PS50172">
    <property type="entry name" value="BRCT"/>
    <property type="match status" value="1"/>
</dbReference>
<dbReference type="PROSITE" id="PS01055">
    <property type="entry name" value="DNA_LIGASE_N1"/>
    <property type="match status" value="1"/>
</dbReference>
<dbReference type="PROSITE" id="PS01056">
    <property type="entry name" value="DNA_LIGASE_N2"/>
    <property type="match status" value="1"/>
</dbReference>
<feature type="chain" id="PRO_0000313530" description="DNA ligase">
    <location>
        <begin position="1"/>
        <end position="691"/>
    </location>
</feature>
<feature type="domain" description="BRCT" evidence="1">
    <location>
        <begin position="607"/>
        <end position="691"/>
    </location>
</feature>
<feature type="active site" description="N6-AMP-lysine intermediate" evidence="1">
    <location>
        <position position="141"/>
    </location>
</feature>
<feature type="binding site" evidence="1">
    <location>
        <begin position="56"/>
        <end position="60"/>
    </location>
    <ligand>
        <name>NAD(+)</name>
        <dbReference type="ChEBI" id="CHEBI:57540"/>
    </ligand>
</feature>
<feature type="binding site" evidence="1">
    <location>
        <begin position="104"/>
        <end position="105"/>
    </location>
    <ligand>
        <name>NAD(+)</name>
        <dbReference type="ChEBI" id="CHEBI:57540"/>
    </ligand>
</feature>
<feature type="binding site" evidence="1">
    <location>
        <position position="139"/>
    </location>
    <ligand>
        <name>NAD(+)</name>
        <dbReference type="ChEBI" id="CHEBI:57540"/>
    </ligand>
</feature>
<feature type="binding site" evidence="1">
    <location>
        <position position="162"/>
    </location>
    <ligand>
        <name>NAD(+)</name>
        <dbReference type="ChEBI" id="CHEBI:57540"/>
    </ligand>
</feature>
<feature type="binding site" evidence="1">
    <location>
        <position position="198"/>
    </location>
    <ligand>
        <name>NAD(+)</name>
        <dbReference type="ChEBI" id="CHEBI:57540"/>
    </ligand>
</feature>
<feature type="binding site" evidence="1">
    <location>
        <position position="314"/>
    </location>
    <ligand>
        <name>NAD(+)</name>
        <dbReference type="ChEBI" id="CHEBI:57540"/>
    </ligand>
</feature>
<feature type="binding site" evidence="1">
    <location>
        <position position="338"/>
    </location>
    <ligand>
        <name>NAD(+)</name>
        <dbReference type="ChEBI" id="CHEBI:57540"/>
    </ligand>
</feature>
<feature type="binding site" evidence="1">
    <location>
        <position position="429"/>
    </location>
    <ligand>
        <name>Zn(2+)</name>
        <dbReference type="ChEBI" id="CHEBI:29105"/>
    </ligand>
</feature>
<feature type="binding site" evidence="1">
    <location>
        <position position="432"/>
    </location>
    <ligand>
        <name>Zn(2+)</name>
        <dbReference type="ChEBI" id="CHEBI:29105"/>
    </ligand>
</feature>
<feature type="binding site" evidence="1">
    <location>
        <position position="445"/>
    </location>
    <ligand>
        <name>Zn(2+)</name>
        <dbReference type="ChEBI" id="CHEBI:29105"/>
    </ligand>
</feature>
<feature type="binding site" evidence="1">
    <location>
        <position position="451"/>
    </location>
    <ligand>
        <name>Zn(2+)</name>
        <dbReference type="ChEBI" id="CHEBI:29105"/>
    </ligand>
</feature>
<protein>
    <recommendedName>
        <fullName evidence="1">DNA ligase</fullName>
        <ecNumber evidence="1">6.5.1.2</ecNumber>
    </recommendedName>
    <alternativeName>
        <fullName evidence="1">Polydeoxyribonucleotide synthase [NAD(+)]</fullName>
    </alternativeName>
</protein>
<gene>
    <name evidence="1" type="primary">ligA</name>
    <name type="ordered locus">NP_0882A</name>
</gene>
<reference key="1">
    <citation type="journal article" date="2005" name="Genome Res.">
        <title>Living with two extremes: conclusions from the genome sequence of Natronomonas pharaonis.</title>
        <authorList>
            <person name="Falb M."/>
            <person name="Pfeiffer F."/>
            <person name="Palm P."/>
            <person name="Rodewald K."/>
            <person name="Hickmann V."/>
            <person name="Tittor J."/>
            <person name="Oesterhelt D."/>
        </authorList>
    </citation>
    <scope>NUCLEOTIDE SEQUENCE [LARGE SCALE GENOMIC DNA]</scope>
    <source>
        <strain>ATCC 35678 / DSM 2160 / CIP 103997 / JCM 8858 / NBRC 14720 / NCIMB 2260 / Gabara</strain>
    </source>
</reference>
<accession>Q3ITK1</accession>
<name>DNLJ_NATPD</name>
<keyword id="KW-0227">DNA damage</keyword>
<keyword id="KW-0234">DNA repair</keyword>
<keyword id="KW-0235">DNA replication</keyword>
<keyword id="KW-0436">Ligase</keyword>
<keyword id="KW-0460">Magnesium</keyword>
<keyword id="KW-0464">Manganese</keyword>
<keyword id="KW-0479">Metal-binding</keyword>
<keyword id="KW-0520">NAD</keyword>
<keyword id="KW-1185">Reference proteome</keyword>
<keyword id="KW-0862">Zinc</keyword>
<proteinExistence type="inferred from homology"/>
<organism>
    <name type="scientific">Natronomonas pharaonis (strain ATCC 35678 / DSM 2160 / CIP 103997 / JCM 8858 / NBRC 14720 / NCIMB 2260 / Gabara)</name>
    <name type="common">Halobacterium pharaonis</name>
    <dbReference type="NCBI Taxonomy" id="348780"/>
    <lineage>
        <taxon>Archaea</taxon>
        <taxon>Methanobacteriati</taxon>
        <taxon>Methanobacteriota</taxon>
        <taxon>Stenosarchaea group</taxon>
        <taxon>Halobacteria</taxon>
        <taxon>Halobacteriales</taxon>
        <taxon>Haloarculaceae</taxon>
        <taxon>Natronomonas</taxon>
    </lineage>
</organism>
<comment type="function">
    <text evidence="1">DNA ligase that catalyzes the formation of phosphodiester linkages between 5'-phosphoryl and 3'-hydroxyl groups in double-stranded DNA using NAD as a coenzyme and as the energy source for the reaction. It is essential for DNA replication and repair of damaged DNA.</text>
</comment>
<comment type="catalytic activity">
    <reaction evidence="1">
        <text>NAD(+) + (deoxyribonucleotide)n-3'-hydroxyl + 5'-phospho-(deoxyribonucleotide)m = (deoxyribonucleotide)n+m + AMP + beta-nicotinamide D-nucleotide.</text>
        <dbReference type="EC" id="6.5.1.2"/>
    </reaction>
</comment>
<comment type="cofactor">
    <cofactor evidence="1">
        <name>Mg(2+)</name>
        <dbReference type="ChEBI" id="CHEBI:18420"/>
    </cofactor>
    <cofactor evidence="1">
        <name>Mn(2+)</name>
        <dbReference type="ChEBI" id="CHEBI:29035"/>
    </cofactor>
</comment>
<comment type="similarity">
    <text evidence="1">Belongs to the NAD-dependent DNA ligase family. LigA subfamily.</text>
</comment>